<reference key="1">
    <citation type="submission" date="2006-03" db="EMBL/GenBank/DDBJ databases">
        <title>Complete sequence of Methylobacillus flagellatus KT.</title>
        <authorList>
            <consortium name="US DOE Joint Genome Institute"/>
            <person name="Copeland A."/>
            <person name="Lucas S."/>
            <person name="Lapidus A."/>
            <person name="Barry K."/>
            <person name="Detter J.C."/>
            <person name="Glavina del Rio T."/>
            <person name="Hammon N."/>
            <person name="Israni S."/>
            <person name="Dalin E."/>
            <person name="Tice H."/>
            <person name="Pitluck S."/>
            <person name="Brettin T."/>
            <person name="Bruce D."/>
            <person name="Han C."/>
            <person name="Tapia R."/>
            <person name="Saunders E."/>
            <person name="Gilna P."/>
            <person name="Schmutz J."/>
            <person name="Larimer F."/>
            <person name="Land M."/>
            <person name="Kyrpides N."/>
            <person name="Anderson I."/>
            <person name="Richardson P."/>
        </authorList>
    </citation>
    <scope>NUCLEOTIDE SEQUENCE [LARGE SCALE GENOMIC DNA]</scope>
    <source>
        <strain>ATCC 51484 / DSM 6875 / VKM B-1610 / KT</strain>
    </source>
</reference>
<sequence length="146" mass="15884">MPEPAASSRGCVLGFDFGEKRIGVAIGEHLLGIAHPLVTIDAEANDKRFAAIAGLIEEWQPEMLVVGLPSYLNGDEHALTQLCRKFARRLEGRFNLPVQLVDERLSSAEASQTLKQSGISGRKQKSVLDQVAAQHILQSYFDGLAS</sequence>
<accession>Q1GZH0</accession>
<dbReference type="EC" id="3.1.-.-" evidence="1"/>
<dbReference type="EMBL" id="CP000284">
    <property type="protein sequence ID" value="ABE50367.1"/>
    <property type="molecule type" value="Genomic_DNA"/>
</dbReference>
<dbReference type="RefSeq" id="WP_011480321.1">
    <property type="nucleotide sequence ID" value="NC_007947.1"/>
</dbReference>
<dbReference type="SMR" id="Q1GZH0"/>
<dbReference type="STRING" id="265072.Mfla_2100"/>
<dbReference type="KEGG" id="mfa:Mfla_2100"/>
<dbReference type="eggNOG" id="COG0816">
    <property type="taxonomic scope" value="Bacteria"/>
</dbReference>
<dbReference type="HOGENOM" id="CLU_098240_3_2_4"/>
<dbReference type="OrthoDB" id="9796140at2"/>
<dbReference type="Proteomes" id="UP000002440">
    <property type="component" value="Chromosome"/>
</dbReference>
<dbReference type="GO" id="GO:0005829">
    <property type="term" value="C:cytosol"/>
    <property type="evidence" value="ECO:0007669"/>
    <property type="project" value="TreeGrafter"/>
</dbReference>
<dbReference type="GO" id="GO:0004518">
    <property type="term" value="F:nuclease activity"/>
    <property type="evidence" value="ECO:0007669"/>
    <property type="project" value="UniProtKB-KW"/>
</dbReference>
<dbReference type="GO" id="GO:0000967">
    <property type="term" value="P:rRNA 5'-end processing"/>
    <property type="evidence" value="ECO:0007669"/>
    <property type="project" value="UniProtKB-UniRule"/>
</dbReference>
<dbReference type="CDD" id="cd16964">
    <property type="entry name" value="YqgF"/>
    <property type="match status" value="1"/>
</dbReference>
<dbReference type="Gene3D" id="3.30.420.140">
    <property type="entry name" value="YqgF/RNase H-like domain"/>
    <property type="match status" value="1"/>
</dbReference>
<dbReference type="HAMAP" id="MF_00651">
    <property type="entry name" value="Nuclease_YqgF"/>
    <property type="match status" value="1"/>
</dbReference>
<dbReference type="InterPro" id="IPR012337">
    <property type="entry name" value="RNaseH-like_sf"/>
</dbReference>
<dbReference type="InterPro" id="IPR005227">
    <property type="entry name" value="YqgF"/>
</dbReference>
<dbReference type="InterPro" id="IPR006641">
    <property type="entry name" value="YqgF/RNaseH-like_dom"/>
</dbReference>
<dbReference type="InterPro" id="IPR037027">
    <property type="entry name" value="YqgF/RNaseH-like_dom_sf"/>
</dbReference>
<dbReference type="NCBIfam" id="TIGR00250">
    <property type="entry name" value="RNAse_H_YqgF"/>
    <property type="match status" value="1"/>
</dbReference>
<dbReference type="PANTHER" id="PTHR33317">
    <property type="entry name" value="POLYNUCLEOTIDYL TRANSFERASE, RIBONUCLEASE H-LIKE SUPERFAMILY PROTEIN"/>
    <property type="match status" value="1"/>
</dbReference>
<dbReference type="PANTHER" id="PTHR33317:SF4">
    <property type="entry name" value="POLYNUCLEOTIDYL TRANSFERASE, RIBONUCLEASE H-LIKE SUPERFAMILY PROTEIN"/>
    <property type="match status" value="1"/>
</dbReference>
<dbReference type="Pfam" id="PF03652">
    <property type="entry name" value="RuvX"/>
    <property type="match status" value="1"/>
</dbReference>
<dbReference type="SMART" id="SM00732">
    <property type="entry name" value="YqgFc"/>
    <property type="match status" value="1"/>
</dbReference>
<dbReference type="SUPFAM" id="SSF53098">
    <property type="entry name" value="Ribonuclease H-like"/>
    <property type="match status" value="1"/>
</dbReference>
<protein>
    <recommendedName>
        <fullName evidence="1">Putative pre-16S rRNA nuclease</fullName>
        <ecNumber evidence="1">3.1.-.-</ecNumber>
    </recommendedName>
</protein>
<evidence type="ECO:0000255" key="1">
    <source>
        <dbReference type="HAMAP-Rule" id="MF_00651"/>
    </source>
</evidence>
<gene>
    <name type="ordered locus">Mfla_2100</name>
</gene>
<feature type="chain" id="PRO_0000257548" description="Putative pre-16S rRNA nuclease">
    <location>
        <begin position="1"/>
        <end position="146"/>
    </location>
</feature>
<keyword id="KW-0963">Cytoplasm</keyword>
<keyword id="KW-0378">Hydrolase</keyword>
<keyword id="KW-0540">Nuclease</keyword>
<keyword id="KW-1185">Reference proteome</keyword>
<keyword id="KW-0690">Ribosome biogenesis</keyword>
<proteinExistence type="inferred from homology"/>
<comment type="function">
    <text evidence="1">Could be a nuclease involved in processing of the 5'-end of pre-16S rRNA.</text>
</comment>
<comment type="subcellular location">
    <subcellularLocation>
        <location evidence="1">Cytoplasm</location>
    </subcellularLocation>
</comment>
<comment type="similarity">
    <text evidence="1">Belongs to the YqgF nuclease family.</text>
</comment>
<organism>
    <name type="scientific">Methylobacillus flagellatus (strain ATCC 51484 / DSM 6875 / VKM B-1610 / KT)</name>
    <dbReference type="NCBI Taxonomy" id="265072"/>
    <lineage>
        <taxon>Bacteria</taxon>
        <taxon>Pseudomonadati</taxon>
        <taxon>Pseudomonadota</taxon>
        <taxon>Betaproteobacteria</taxon>
        <taxon>Nitrosomonadales</taxon>
        <taxon>Methylophilaceae</taxon>
        <taxon>Methylobacillus</taxon>
    </lineage>
</organism>
<name>YQGF_METFK</name>